<dbReference type="EC" id="6.2.1.14" evidence="1"/>
<dbReference type="EMBL" id="CP001792">
    <property type="protein sequence ID" value="ACX76536.1"/>
    <property type="molecule type" value="Genomic_DNA"/>
</dbReference>
<dbReference type="EMBL" id="CP002158">
    <property type="protein sequence ID" value="ADL26496.1"/>
    <property type="molecule type" value="Genomic_DNA"/>
</dbReference>
<dbReference type="RefSeq" id="WP_014545061.1">
    <property type="nucleotide sequence ID" value="NC_013410.1"/>
</dbReference>
<dbReference type="SMR" id="C9RPK4"/>
<dbReference type="STRING" id="59374.FSU_0221"/>
<dbReference type="KEGG" id="fsc:FSU_0221"/>
<dbReference type="KEGG" id="fsu:Fisuc_2956"/>
<dbReference type="PATRIC" id="fig|59374.8.peg.213"/>
<dbReference type="eggNOG" id="COG1424">
    <property type="taxonomic scope" value="Bacteria"/>
</dbReference>
<dbReference type="HOGENOM" id="CLU_076858_0_0_0"/>
<dbReference type="OrthoDB" id="9792985at2"/>
<dbReference type="UniPathway" id="UPA00999">
    <property type="reaction ID" value="UER00351"/>
</dbReference>
<dbReference type="Proteomes" id="UP000000517">
    <property type="component" value="Chromosome"/>
</dbReference>
<dbReference type="GO" id="GO:0042410">
    <property type="term" value="F:6-carboxyhexanoate-CoA ligase activity"/>
    <property type="evidence" value="ECO:0007669"/>
    <property type="project" value="UniProtKB-UniRule"/>
</dbReference>
<dbReference type="GO" id="GO:0005524">
    <property type="term" value="F:ATP binding"/>
    <property type="evidence" value="ECO:0007669"/>
    <property type="project" value="UniProtKB-KW"/>
</dbReference>
<dbReference type="GO" id="GO:0000287">
    <property type="term" value="F:magnesium ion binding"/>
    <property type="evidence" value="ECO:0007669"/>
    <property type="project" value="UniProtKB-UniRule"/>
</dbReference>
<dbReference type="GO" id="GO:0009102">
    <property type="term" value="P:biotin biosynthetic process"/>
    <property type="evidence" value="ECO:0007669"/>
    <property type="project" value="UniProtKB-UniRule"/>
</dbReference>
<dbReference type="HAMAP" id="MF_00668">
    <property type="entry name" value="BioW"/>
    <property type="match status" value="1"/>
</dbReference>
<dbReference type="InterPro" id="IPR005499">
    <property type="entry name" value="BioW"/>
</dbReference>
<dbReference type="NCBIfam" id="TIGR01204">
    <property type="entry name" value="bioW"/>
    <property type="match status" value="1"/>
</dbReference>
<dbReference type="NCBIfam" id="NF002360">
    <property type="entry name" value="PRK01322.1"/>
    <property type="match status" value="1"/>
</dbReference>
<dbReference type="Pfam" id="PF03744">
    <property type="entry name" value="BioW"/>
    <property type="match status" value="1"/>
</dbReference>
<reference key="1">
    <citation type="submission" date="2009-10" db="EMBL/GenBank/DDBJ databases">
        <title>Complete sequence of Fibrobacter succinogenes subsp. succinogenes S85.</title>
        <authorList>
            <consortium name="US DOE Joint Genome Institute"/>
            <person name="Lucas S."/>
            <person name="Copeland A."/>
            <person name="Lapidus A."/>
            <person name="Glavina del Rio T."/>
            <person name="Tice H."/>
            <person name="Bruce D."/>
            <person name="Goodwin L."/>
            <person name="Pitluck S."/>
            <person name="Chertkov O."/>
            <person name="Detter J.C."/>
            <person name="Han C."/>
            <person name="Tapia R."/>
            <person name="Larimer F."/>
            <person name="Land M."/>
            <person name="Hauser L."/>
            <person name="Kyrpides N."/>
            <person name="Mikhailova N."/>
            <person name="Weimer P.J."/>
            <person name="Stevenson D.M."/>
            <person name="Boyum J."/>
            <person name="Brumm P.I."/>
            <person name="Mead D."/>
        </authorList>
    </citation>
    <scope>NUCLEOTIDE SEQUENCE [LARGE SCALE GENOMIC DNA]</scope>
    <source>
        <strain>ATCC 19169 / S85</strain>
    </source>
</reference>
<reference key="2">
    <citation type="submission" date="2010-08" db="EMBL/GenBank/DDBJ databases">
        <title>Complete sequence of Fibrobacter succinogenes subsp. succinogenes S85.</title>
        <authorList>
            <person name="Durkin A.S."/>
            <person name="Nelson K.E."/>
            <person name="Morrison M."/>
            <person name="Forsberg C.W."/>
            <person name="Wilson D.B."/>
            <person name="Russell J.B."/>
            <person name="Cann I.K.O."/>
            <person name="Mackie R.I."/>
            <person name="White B.A."/>
        </authorList>
    </citation>
    <scope>NUCLEOTIDE SEQUENCE [LARGE SCALE GENOMIC DNA]</scope>
    <source>
        <strain>ATCC 19169 / S85</strain>
    </source>
</reference>
<gene>
    <name evidence="1" type="primary">bioW</name>
    <name type="ordered locus">Fisuc_2956</name>
    <name type="ordered locus">FSU_0221</name>
</gene>
<evidence type="ECO:0000255" key="1">
    <source>
        <dbReference type="HAMAP-Rule" id="MF_00668"/>
    </source>
</evidence>
<sequence length="260" mass="29035">MDYYSLKMRASQHVGEGENSHEQHISGAERIVGRDSVEAVCAAMVRRAMNHSKGDPDFINVKIEKVHESDIQVLKSLPVTRVDVETWQEGLEKAFGLITPLMALRQAQGPCDGAKKFKEKLQDLLRETFPMRGAMLYDIATGNRLEPDKDRGVRATYMDALHSSEVDGCKNHFNEAIVLATKVANAPGMVAEFCVSDDPNYVTGYVASKELGYVRIMKMKEMGDENGGRIFLFDSRKASAEECIEYLQKKKVLVDVVGRT</sequence>
<comment type="function">
    <text evidence="1">Catalyzes the transformation of pimelate into pimeloyl-CoA with concomitant hydrolysis of ATP to AMP.</text>
</comment>
<comment type="catalytic activity">
    <reaction evidence="1">
        <text>heptanedioate + ATP + CoA = 6-carboxyhexanoyl-CoA + AMP + diphosphate</text>
        <dbReference type="Rhea" id="RHEA:14781"/>
        <dbReference type="ChEBI" id="CHEBI:30616"/>
        <dbReference type="ChEBI" id="CHEBI:33019"/>
        <dbReference type="ChEBI" id="CHEBI:36165"/>
        <dbReference type="ChEBI" id="CHEBI:57287"/>
        <dbReference type="ChEBI" id="CHEBI:57360"/>
        <dbReference type="ChEBI" id="CHEBI:456215"/>
        <dbReference type="EC" id="6.2.1.14"/>
    </reaction>
</comment>
<comment type="cofactor">
    <cofactor evidence="1">
        <name>Mg(2+)</name>
        <dbReference type="ChEBI" id="CHEBI:18420"/>
    </cofactor>
</comment>
<comment type="pathway">
    <text evidence="1">Metabolic intermediate metabolism; pimeloyl-CoA biosynthesis; pimeloyl-CoA from pimelate: step 1/1.</text>
</comment>
<comment type="subunit">
    <text evidence="1">Homodimer.</text>
</comment>
<comment type="similarity">
    <text evidence="1">Belongs to the BioW family.</text>
</comment>
<organism>
    <name type="scientific">Fibrobacter succinogenes (strain ATCC 19169 / S85)</name>
    <dbReference type="NCBI Taxonomy" id="59374"/>
    <lineage>
        <taxon>Bacteria</taxon>
        <taxon>Pseudomonadati</taxon>
        <taxon>Fibrobacterota</taxon>
        <taxon>Fibrobacteria</taxon>
        <taxon>Fibrobacterales</taxon>
        <taxon>Fibrobacteraceae</taxon>
        <taxon>Fibrobacter</taxon>
    </lineage>
</organism>
<protein>
    <recommendedName>
        <fullName evidence="1">6-carboxyhexanoate--CoA ligase</fullName>
        <ecNumber evidence="1">6.2.1.14</ecNumber>
    </recommendedName>
    <alternativeName>
        <fullName evidence="1">Pimeloyl-CoA synthase</fullName>
    </alternativeName>
</protein>
<feature type="chain" id="PRO_0000412085" description="6-carboxyhexanoate--CoA ligase">
    <location>
        <begin position="1"/>
        <end position="260"/>
    </location>
</feature>
<name>BIOW_FIBSS</name>
<proteinExistence type="inferred from homology"/>
<keyword id="KW-0067">ATP-binding</keyword>
<keyword id="KW-0093">Biotin biosynthesis</keyword>
<keyword id="KW-0436">Ligase</keyword>
<keyword id="KW-0460">Magnesium</keyword>
<keyword id="KW-0547">Nucleotide-binding</keyword>
<accession>C9RPK4</accession>